<dbReference type="EC" id="3.6.-.-" evidence="1"/>
<dbReference type="EMBL" id="BA000021">
    <property type="protein sequence ID" value="BAC24158.1"/>
    <property type="molecule type" value="Genomic_DNA"/>
</dbReference>
<dbReference type="SMR" id="Q8D3I9"/>
<dbReference type="STRING" id="36870.gene:10368490"/>
<dbReference type="KEGG" id="wbr:thdF"/>
<dbReference type="eggNOG" id="COG0486">
    <property type="taxonomic scope" value="Bacteria"/>
</dbReference>
<dbReference type="HOGENOM" id="CLU_019624_4_1_6"/>
<dbReference type="OrthoDB" id="9805918at2"/>
<dbReference type="Proteomes" id="UP000000562">
    <property type="component" value="Chromosome"/>
</dbReference>
<dbReference type="GO" id="GO:0005829">
    <property type="term" value="C:cytosol"/>
    <property type="evidence" value="ECO:0007669"/>
    <property type="project" value="TreeGrafter"/>
</dbReference>
<dbReference type="GO" id="GO:0005525">
    <property type="term" value="F:GTP binding"/>
    <property type="evidence" value="ECO:0007669"/>
    <property type="project" value="UniProtKB-UniRule"/>
</dbReference>
<dbReference type="GO" id="GO:0003924">
    <property type="term" value="F:GTPase activity"/>
    <property type="evidence" value="ECO:0007669"/>
    <property type="project" value="UniProtKB-UniRule"/>
</dbReference>
<dbReference type="GO" id="GO:0046872">
    <property type="term" value="F:metal ion binding"/>
    <property type="evidence" value="ECO:0007669"/>
    <property type="project" value="UniProtKB-KW"/>
</dbReference>
<dbReference type="GO" id="GO:0030488">
    <property type="term" value="P:tRNA methylation"/>
    <property type="evidence" value="ECO:0007669"/>
    <property type="project" value="TreeGrafter"/>
</dbReference>
<dbReference type="GO" id="GO:0002098">
    <property type="term" value="P:tRNA wobble uridine modification"/>
    <property type="evidence" value="ECO:0007669"/>
    <property type="project" value="TreeGrafter"/>
</dbReference>
<dbReference type="CDD" id="cd04164">
    <property type="entry name" value="trmE"/>
    <property type="match status" value="1"/>
</dbReference>
<dbReference type="CDD" id="cd14858">
    <property type="entry name" value="TrmE_N"/>
    <property type="match status" value="1"/>
</dbReference>
<dbReference type="Gene3D" id="3.40.50.300">
    <property type="entry name" value="P-loop containing nucleotide triphosphate hydrolases"/>
    <property type="match status" value="1"/>
</dbReference>
<dbReference type="Gene3D" id="3.30.1360.120">
    <property type="entry name" value="Probable tRNA modification gtpase trme, domain 1"/>
    <property type="match status" value="1"/>
</dbReference>
<dbReference type="Gene3D" id="1.20.120.430">
    <property type="entry name" value="tRNA modification GTPase MnmE domain 2"/>
    <property type="match status" value="1"/>
</dbReference>
<dbReference type="HAMAP" id="MF_00379">
    <property type="entry name" value="GTPase_MnmE"/>
    <property type="match status" value="1"/>
</dbReference>
<dbReference type="InterPro" id="IPR031168">
    <property type="entry name" value="G_TrmE"/>
</dbReference>
<dbReference type="InterPro" id="IPR006073">
    <property type="entry name" value="GTP-bd"/>
</dbReference>
<dbReference type="InterPro" id="IPR018948">
    <property type="entry name" value="GTP-bd_TrmE_N"/>
</dbReference>
<dbReference type="InterPro" id="IPR004520">
    <property type="entry name" value="GTPase_MnmE"/>
</dbReference>
<dbReference type="InterPro" id="IPR027368">
    <property type="entry name" value="MnmE_dom2"/>
</dbReference>
<dbReference type="InterPro" id="IPR025867">
    <property type="entry name" value="MnmE_helical"/>
</dbReference>
<dbReference type="InterPro" id="IPR027417">
    <property type="entry name" value="P-loop_NTPase"/>
</dbReference>
<dbReference type="InterPro" id="IPR005225">
    <property type="entry name" value="Small_GTP-bd"/>
</dbReference>
<dbReference type="InterPro" id="IPR027266">
    <property type="entry name" value="TrmE/GcvT_dom1"/>
</dbReference>
<dbReference type="NCBIfam" id="TIGR00450">
    <property type="entry name" value="mnmE_trmE_thdF"/>
    <property type="match status" value="1"/>
</dbReference>
<dbReference type="NCBIfam" id="NF003661">
    <property type="entry name" value="PRK05291.1-3"/>
    <property type="match status" value="1"/>
</dbReference>
<dbReference type="NCBIfam" id="TIGR00231">
    <property type="entry name" value="small_GTP"/>
    <property type="match status" value="1"/>
</dbReference>
<dbReference type="PANTHER" id="PTHR42714">
    <property type="entry name" value="TRNA MODIFICATION GTPASE GTPBP3"/>
    <property type="match status" value="1"/>
</dbReference>
<dbReference type="PANTHER" id="PTHR42714:SF2">
    <property type="entry name" value="TRNA MODIFICATION GTPASE GTPBP3, MITOCHONDRIAL"/>
    <property type="match status" value="1"/>
</dbReference>
<dbReference type="Pfam" id="PF01926">
    <property type="entry name" value="MMR_HSR1"/>
    <property type="match status" value="1"/>
</dbReference>
<dbReference type="Pfam" id="PF12631">
    <property type="entry name" value="MnmE_helical"/>
    <property type="match status" value="1"/>
</dbReference>
<dbReference type="Pfam" id="PF10396">
    <property type="entry name" value="TrmE_N"/>
    <property type="match status" value="1"/>
</dbReference>
<dbReference type="PRINTS" id="PR00326">
    <property type="entry name" value="GTP1OBG"/>
</dbReference>
<dbReference type="SUPFAM" id="SSF52540">
    <property type="entry name" value="P-loop containing nucleoside triphosphate hydrolases"/>
    <property type="match status" value="1"/>
</dbReference>
<dbReference type="PROSITE" id="PS51709">
    <property type="entry name" value="G_TRME"/>
    <property type="match status" value="1"/>
</dbReference>
<accession>Q8D3I9</accession>
<reference key="1">
    <citation type="journal article" date="2002" name="Nat. Genet.">
        <title>Genome sequence of the endocellular obligate symbiont of tsetse flies, Wigglesworthia glossinidia.</title>
        <authorList>
            <person name="Akman L."/>
            <person name="Yamashita A."/>
            <person name="Watanabe H."/>
            <person name="Oshima K."/>
            <person name="Shiba T."/>
            <person name="Hattori M."/>
            <person name="Aksoy S."/>
        </authorList>
    </citation>
    <scope>NUCLEOTIDE SEQUENCE [LARGE SCALE GENOMIC DNA]</scope>
</reference>
<comment type="function">
    <text evidence="1">Exhibits a very high intrinsic GTPase hydrolysis rate. Involved in the addition of a carboxymethylaminomethyl (cmnm) group at the wobble position (U34) of certain tRNAs, forming tRNA-cmnm(5)s(2)U34.</text>
</comment>
<comment type="cofactor">
    <cofactor evidence="1">
        <name>K(+)</name>
        <dbReference type="ChEBI" id="CHEBI:29103"/>
    </cofactor>
    <text evidence="1">Binds 1 potassium ion per subunit.</text>
</comment>
<comment type="subunit">
    <text evidence="1">Homodimer. Heterotetramer of two MnmE and two MnmG subunits.</text>
</comment>
<comment type="subcellular location">
    <subcellularLocation>
        <location evidence="1">Cytoplasm</location>
    </subcellularLocation>
</comment>
<comment type="similarity">
    <text evidence="1">Belongs to the TRAFAC class TrmE-Era-EngA-EngB-Septin-like GTPase superfamily. TrmE GTPase family.</text>
</comment>
<evidence type="ECO:0000255" key="1">
    <source>
        <dbReference type="HAMAP-Rule" id="MF_00379"/>
    </source>
</evidence>
<sequence>MFKKDSIVAIATPPGKGGIGIIRVSGNLSVKIAKIFLKRLPKEKQAEYIPFYSKNGNTLDQGIALFFKSPKSLTGEDVLEFQAHGSPVALNFLLQEILSIKGMRLAKPGEFLERAFINGKIDLIQAEAISDLINSCSIQAAKSALISIRGYFSKKINNLILSIKKLRMKIEVDIDFSEENFNKISIECIKHDLEKIILNINKIQCSFNRGAILKEGSKIVIIGKPNSGKSSIFNILSGNNNAIVTSIEGTTRDILHEHIYLDNIPLHIYDTAGLRKTDDKIEKIGILRALKEIKTSDHILLIVDSNIDKSNDINLIWPKFNSNIKNKITIIRNKIDLSKEIPEIKIFKKNNIISLSAYTGEGVDILIKYLKDLNCLLLNEEGCILARTRHILEIKKAKNNILNAKKLLNKYNLSDFVSEELRIAQSCLEKILGINNNSNDFLNEIFSNFCIGK</sequence>
<name>MNME_WIGBR</name>
<organism>
    <name type="scientific">Wigglesworthia glossinidia brevipalpis</name>
    <dbReference type="NCBI Taxonomy" id="36870"/>
    <lineage>
        <taxon>Bacteria</taxon>
        <taxon>Pseudomonadati</taxon>
        <taxon>Pseudomonadota</taxon>
        <taxon>Gammaproteobacteria</taxon>
        <taxon>Enterobacterales</taxon>
        <taxon>Erwiniaceae</taxon>
        <taxon>Wigglesworthia</taxon>
    </lineage>
</organism>
<gene>
    <name evidence="1" type="primary">mnmE</name>
    <name evidence="1" type="synonym">thdF</name>
    <name evidence="1" type="synonym">trmE</name>
    <name type="ordered locus">WIGBR0120</name>
</gene>
<keyword id="KW-0963">Cytoplasm</keyword>
<keyword id="KW-0342">GTP-binding</keyword>
<keyword id="KW-0378">Hydrolase</keyword>
<keyword id="KW-0460">Magnesium</keyword>
<keyword id="KW-0479">Metal-binding</keyword>
<keyword id="KW-0547">Nucleotide-binding</keyword>
<keyword id="KW-0630">Potassium</keyword>
<keyword id="KW-1185">Reference proteome</keyword>
<keyword id="KW-0819">tRNA processing</keyword>
<proteinExistence type="inferred from homology"/>
<protein>
    <recommendedName>
        <fullName evidence="1">tRNA modification GTPase MnmE</fullName>
        <ecNumber evidence="1">3.6.-.-</ecNumber>
    </recommendedName>
</protein>
<feature type="chain" id="PRO_0000188947" description="tRNA modification GTPase MnmE">
    <location>
        <begin position="1"/>
        <end position="453"/>
    </location>
</feature>
<feature type="domain" description="TrmE-type G">
    <location>
        <begin position="216"/>
        <end position="375"/>
    </location>
</feature>
<feature type="binding site" evidence="1">
    <location>
        <position position="23"/>
    </location>
    <ligand>
        <name>(6S)-5-formyl-5,6,7,8-tetrahydrofolate</name>
        <dbReference type="ChEBI" id="CHEBI:57457"/>
    </ligand>
</feature>
<feature type="binding site" evidence="1">
    <location>
        <position position="80"/>
    </location>
    <ligand>
        <name>(6S)-5-formyl-5,6,7,8-tetrahydrofolate</name>
        <dbReference type="ChEBI" id="CHEBI:57457"/>
    </ligand>
</feature>
<feature type="binding site" evidence="1">
    <location>
        <position position="120"/>
    </location>
    <ligand>
        <name>(6S)-5-formyl-5,6,7,8-tetrahydrofolate</name>
        <dbReference type="ChEBI" id="CHEBI:57457"/>
    </ligand>
</feature>
<feature type="binding site" evidence="1">
    <location>
        <begin position="226"/>
        <end position="231"/>
    </location>
    <ligand>
        <name>GTP</name>
        <dbReference type="ChEBI" id="CHEBI:37565"/>
    </ligand>
</feature>
<feature type="binding site" evidence="1">
    <location>
        <position position="226"/>
    </location>
    <ligand>
        <name>K(+)</name>
        <dbReference type="ChEBI" id="CHEBI:29103"/>
    </ligand>
</feature>
<feature type="binding site" evidence="1">
    <location>
        <position position="230"/>
    </location>
    <ligand>
        <name>Mg(2+)</name>
        <dbReference type="ChEBI" id="CHEBI:18420"/>
    </ligand>
</feature>
<feature type="binding site" evidence="1">
    <location>
        <begin position="245"/>
        <end position="251"/>
    </location>
    <ligand>
        <name>GTP</name>
        <dbReference type="ChEBI" id="CHEBI:37565"/>
    </ligand>
</feature>
<feature type="binding site" evidence="1">
    <location>
        <position position="245"/>
    </location>
    <ligand>
        <name>K(+)</name>
        <dbReference type="ChEBI" id="CHEBI:29103"/>
    </ligand>
</feature>
<feature type="binding site" evidence="1">
    <location>
        <position position="247"/>
    </location>
    <ligand>
        <name>K(+)</name>
        <dbReference type="ChEBI" id="CHEBI:29103"/>
    </ligand>
</feature>
<feature type="binding site" evidence="1">
    <location>
        <position position="250"/>
    </location>
    <ligand>
        <name>K(+)</name>
        <dbReference type="ChEBI" id="CHEBI:29103"/>
    </ligand>
</feature>
<feature type="binding site" evidence="1">
    <location>
        <position position="251"/>
    </location>
    <ligand>
        <name>Mg(2+)</name>
        <dbReference type="ChEBI" id="CHEBI:18420"/>
    </ligand>
</feature>
<feature type="binding site" evidence="1">
    <location>
        <begin position="270"/>
        <end position="273"/>
    </location>
    <ligand>
        <name>GTP</name>
        <dbReference type="ChEBI" id="CHEBI:37565"/>
    </ligand>
</feature>
<feature type="binding site" evidence="1">
    <location>
        <position position="453"/>
    </location>
    <ligand>
        <name>(6S)-5-formyl-5,6,7,8-tetrahydrofolate</name>
        <dbReference type="ChEBI" id="CHEBI:57457"/>
    </ligand>
</feature>